<organism>
    <name type="scientific">Pseudomonas putida (strain ATCC 700007 / DSM 6899 / JCM 31910 / BCRC 17059 / LMG 24140 / F1)</name>
    <dbReference type="NCBI Taxonomy" id="351746"/>
    <lineage>
        <taxon>Bacteria</taxon>
        <taxon>Pseudomonadati</taxon>
        <taxon>Pseudomonadota</taxon>
        <taxon>Gammaproteobacteria</taxon>
        <taxon>Pseudomonadales</taxon>
        <taxon>Pseudomonadaceae</taxon>
        <taxon>Pseudomonas</taxon>
    </lineage>
</organism>
<gene>
    <name evidence="1" type="primary">purA</name>
    <name type="ordered locus">Pput_4765</name>
</gene>
<evidence type="ECO:0000255" key="1">
    <source>
        <dbReference type="HAMAP-Rule" id="MF_00011"/>
    </source>
</evidence>
<dbReference type="EC" id="6.3.4.4" evidence="1"/>
<dbReference type="EMBL" id="CP000712">
    <property type="protein sequence ID" value="ABQ80885.1"/>
    <property type="molecule type" value="Genomic_DNA"/>
</dbReference>
<dbReference type="SMR" id="A5W9S5"/>
<dbReference type="KEGG" id="ppf:Pput_4765"/>
<dbReference type="eggNOG" id="COG0104">
    <property type="taxonomic scope" value="Bacteria"/>
</dbReference>
<dbReference type="HOGENOM" id="CLU_029848_0_0_6"/>
<dbReference type="UniPathway" id="UPA00075">
    <property type="reaction ID" value="UER00335"/>
</dbReference>
<dbReference type="GO" id="GO:0005737">
    <property type="term" value="C:cytoplasm"/>
    <property type="evidence" value="ECO:0007669"/>
    <property type="project" value="UniProtKB-SubCell"/>
</dbReference>
<dbReference type="GO" id="GO:0004019">
    <property type="term" value="F:adenylosuccinate synthase activity"/>
    <property type="evidence" value="ECO:0007669"/>
    <property type="project" value="UniProtKB-UniRule"/>
</dbReference>
<dbReference type="GO" id="GO:0005525">
    <property type="term" value="F:GTP binding"/>
    <property type="evidence" value="ECO:0007669"/>
    <property type="project" value="UniProtKB-UniRule"/>
</dbReference>
<dbReference type="GO" id="GO:0000287">
    <property type="term" value="F:magnesium ion binding"/>
    <property type="evidence" value="ECO:0007669"/>
    <property type="project" value="UniProtKB-UniRule"/>
</dbReference>
<dbReference type="GO" id="GO:0044208">
    <property type="term" value="P:'de novo' AMP biosynthetic process"/>
    <property type="evidence" value="ECO:0007669"/>
    <property type="project" value="UniProtKB-UniRule"/>
</dbReference>
<dbReference type="GO" id="GO:0046040">
    <property type="term" value="P:IMP metabolic process"/>
    <property type="evidence" value="ECO:0007669"/>
    <property type="project" value="TreeGrafter"/>
</dbReference>
<dbReference type="CDD" id="cd03108">
    <property type="entry name" value="AdSS"/>
    <property type="match status" value="1"/>
</dbReference>
<dbReference type="FunFam" id="1.10.300.10:FF:000001">
    <property type="entry name" value="Adenylosuccinate synthetase"/>
    <property type="match status" value="1"/>
</dbReference>
<dbReference type="FunFam" id="3.90.170.10:FF:000001">
    <property type="entry name" value="Adenylosuccinate synthetase"/>
    <property type="match status" value="1"/>
</dbReference>
<dbReference type="Gene3D" id="3.40.440.10">
    <property type="entry name" value="Adenylosuccinate Synthetase, subunit A, domain 1"/>
    <property type="match status" value="1"/>
</dbReference>
<dbReference type="Gene3D" id="1.10.300.10">
    <property type="entry name" value="Adenylosuccinate Synthetase, subunit A, domain 2"/>
    <property type="match status" value="1"/>
</dbReference>
<dbReference type="Gene3D" id="3.90.170.10">
    <property type="entry name" value="Adenylosuccinate Synthetase, subunit A, domain 3"/>
    <property type="match status" value="1"/>
</dbReference>
<dbReference type="HAMAP" id="MF_00011">
    <property type="entry name" value="Adenylosucc_synth"/>
    <property type="match status" value="1"/>
</dbReference>
<dbReference type="InterPro" id="IPR018220">
    <property type="entry name" value="Adenylosuccin_syn_GTP-bd"/>
</dbReference>
<dbReference type="InterPro" id="IPR033128">
    <property type="entry name" value="Adenylosuccin_syn_Lys_AS"/>
</dbReference>
<dbReference type="InterPro" id="IPR042109">
    <property type="entry name" value="Adenylosuccinate_synth_dom1"/>
</dbReference>
<dbReference type="InterPro" id="IPR042110">
    <property type="entry name" value="Adenylosuccinate_synth_dom2"/>
</dbReference>
<dbReference type="InterPro" id="IPR042111">
    <property type="entry name" value="Adenylosuccinate_synth_dom3"/>
</dbReference>
<dbReference type="InterPro" id="IPR001114">
    <property type="entry name" value="Adenylosuccinate_synthetase"/>
</dbReference>
<dbReference type="InterPro" id="IPR027417">
    <property type="entry name" value="P-loop_NTPase"/>
</dbReference>
<dbReference type="NCBIfam" id="NF002223">
    <property type="entry name" value="PRK01117.1"/>
    <property type="match status" value="1"/>
</dbReference>
<dbReference type="NCBIfam" id="TIGR00184">
    <property type="entry name" value="purA"/>
    <property type="match status" value="1"/>
</dbReference>
<dbReference type="PANTHER" id="PTHR11846">
    <property type="entry name" value="ADENYLOSUCCINATE SYNTHETASE"/>
    <property type="match status" value="1"/>
</dbReference>
<dbReference type="PANTHER" id="PTHR11846:SF0">
    <property type="entry name" value="ADENYLOSUCCINATE SYNTHETASE"/>
    <property type="match status" value="1"/>
</dbReference>
<dbReference type="Pfam" id="PF00709">
    <property type="entry name" value="Adenylsucc_synt"/>
    <property type="match status" value="1"/>
</dbReference>
<dbReference type="SMART" id="SM00788">
    <property type="entry name" value="Adenylsucc_synt"/>
    <property type="match status" value="1"/>
</dbReference>
<dbReference type="SUPFAM" id="SSF52540">
    <property type="entry name" value="P-loop containing nucleoside triphosphate hydrolases"/>
    <property type="match status" value="1"/>
</dbReference>
<dbReference type="PROSITE" id="PS01266">
    <property type="entry name" value="ADENYLOSUCCIN_SYN_1"/>
    <property type="match status" value="1"/>
</dbReference>
<dbReference type="PROSITE" id="PS00513">
    <property type="entry name" value="ADENYLOSUCCIN_SYN_2"/>
    <property type="match status" value="1"/>
</dbReference>
<protein>
    <recommendedName>
        <fullName evidence="1">Adenylosuccinate synthetase</fullName>
        <shortName evidence="1">AMPSase</shortName>
        <shortName evidence="1">AdSS</shortName>
        <ecNumber evidence="1">6.3.4.4</ecNumber>
    </recommendedName>
    <alternativeName>
        <fullName evidence="1">IMP--aspartate ligase</fullName>
    </alternativeName>
</protein>
<comment type="function">
    <text evidence="1">Plays an important role in the de novo pathway of purine nucleotide biosynthesis. Catalyzes the first committed step in the biosynthesis of AMP from IMP.</text>
</comment>
<comment type="catalytic activity">
    <reaction evidence="1">
        <text>IMP + L-aspartate + GTP = N(6)-(1,2-dicarboxyethyl)-AMP + GDP + phosphate + 2 H(+)</text>
        <dbReference type="Rhea" id="RHEA:15753"/>
        <dbReference type="ChEBI" id="CHEBI:15378"/>
        <dbReference type="ChEBI" id="CHEBI:29991"/>
        <dbReference type="ChEBI" id="CHEBI:37565"/>
        <dbReference type="ChEBI" id="CHEBI:43474"/>
        <dbReference type="ChEBI" id="CHEBI:57567"/>
        <dbReference type="ChEBI" id="CHEBI:58053"/>
        <dbReference type="ChEBI" id="CHEBI:58189"/>
        <dbReference type="EC" id="6.3.4.4"/>
    </reaction>
</comment>
<comment type="cofactor">
    <cofactor evidence="1">
        <name>Mg(2+)</name>
        <dbReference type="ChEBI" id="CHEBI:18420"/>
    </cofactor>
    <text evidence="1">Binds 1 Mg(2+) ion per subunit.</text>
</comment>
<comment type="pathway">
    <text evidence="1">Purine metabolism; AMP biosynthesis via de novo pathway; AMP from IMP: step 1/2.</text>
</comment>
<comment type="subunit">
    <text evidence="1">Homodimer.</text>
</comment>
<comment type="subcellular location">
    <subcellularLocation>
        <location evidence="1">Cytoplasm</location>
    </subcellularLocation>
</comment>
<comment type="similarity">
    <text evidence="1">Belongs to the adenylosuccinate synthetase family.</text>
</comment>
<accession>A5W9S5</accession>
<reference key="1">
    <citation type="submission" date="2007-05" db="EMBL/GenBank/DDBJ databases">
        <title>Complete sequence of Pseudomonas putida F1.</title>
        <authorList>
            <consortium name="US DOE Joint Genome Institute"/>
            <person name="Copeland A."/>
            <person name="Lucas S."/>
            <person name="Lapidus A."/>
            <person name="Barry K."/>
            <person name="Detter J.C."/>
            <person name="Glavina del Rio T."/>
            <person name="Hammon N."/>
            <person name="Israni S."/>
            <person name="Dalin E."/>
            <person name="Tice H."/>
            <person name="Pitluck S."/>
            <person name="Chain P."/>
            <person name="Malfatti S."/>
            <person name="Shin M."/>
            <person name="Vergez L."/>
            <person name="Schmutz J."/>
            <person name="Larimer F."/>
            <person name="Land M."/>
            <person name="Hauser L."/>
            <person name="Kyrpides N."/>
            <person name="Lykidis A."/>
            <person name="Parales R."/>
            <person name="Richardson P."/>
        </authorList>
    </citation>
    <scope>NUCLEOTIDE SEQUENCE [LARGE SCALE GENOMIC DNA]</scope>
    <source>
        <strain>ATCC 700007 / DSM 6899 / JCM 31910 / BCRC 17059 / LMG 24140 / F1</strain>
    </source>
</reference>
<name>PURA_PSEP1</name>
<keyword id="KW-0963">Cytoplasm</keyword>
<keyword id="KW-0342">GTP-binding</keyword>
<keyword id="KW-0436">Ligase</keyword>
<keyword id="KW-0460">Magnesium</keyword>
<keyword id="KW-0479">Metal-binding</keyword>
<keyword id="KW-0547">Nucleotide-binding</keyword>
<keyword id="KW-0658">Purine biosynthesis</keyword>
<sequence>MGKNVVVLGTQWGDEGKGKIVDLLTEHAAAVVRYQGGHNAGHTLVINGEKTVLHLIPSGILREGVQCLIGNGVVVAPDALMREITKLEEKGVPVRERLRISPAAPLILSYHVALDQAREKARGEAKIGTTGRGIGPAYEDKVARRGLRVGDLFHRERFAAKLGELLDYHNFQLVNYYKEPAIDFQQTLDECMAYAEQLKPMMLDVTAELHNLRRAGKDIMFEGAQGSLLDIDHGTYPYVTSSNTTAGGISTGSGVGPMYLDYILGITKAYTTRVGSGPFPTELFDETGATLAKRGHEFGSTTGRARRCGWFDAVILRRAIDVNSISGICLTKLDVLDGLETINICVGYKNENGAVIDAPSDADSYIGLEPVYEEMPGWSESTLGVKTLEELPQAARDYIKRIEELVGAPIDIISTGPDRNETIVLRHPFA</sequence>
<proteinExistence type="inferred from homology"/>
<feature type="chain" id="PRO_1000000898" description="Adenylosuccinate synthetase">
    <location>
        <begin position="1"/>
        <end position="430"/>
    </location>
</feature>
<feature type="active site" description="Proton acceptor" evidence="1">
    <location>
        <position position="14"/>
    </location>
</feature>
<feature type="active site" description="Proton donor" evidence="1">
    <location>
        <position position="42"/>
    </location>
</feature>
<feature type="binding site" evidence="1">
    <location>
        <begin position="13"/>
        <end position="19"/>
    </location>
    <ligand>
        <name>GTP</name>
        <dbReference type="ChEBI" id="CHEBI:37565"/>
    </ligand>
</feature>
<feature type="binding site" description="in other chain" evidence="1">
    <location>
        <begin position="14"/>
        <end position="17"/>
    </location>
    <ligand>
        <name>IMP</name>
        <dbReference type="ChEBI" id="CHEBI:58053"/>
        <note>ligand shared between dimeric partners</note>
    </ligand>
</feature>
<feature type="binding site" evidence="1">
    <location>
        <position position="14"/>
    </location>
    <ligand>
        <name>Mg(2+)</name>
        <dbReference type="ChEBI" id="CHEBI:18420"/>
    </ligand>
</feature>
<feature type="binding site" description="in other chain" evidence="1">
    <location>
        <begin position="39"/>
        <end position="42"/>
    </location>
    <ligand>
        <name>IMP</name>
        <dbReference type="ChEBI" id="CHEBI:58053"/>
        <note>ligand shared between dimeric partners</note>
    </ligand>
</feature>
<feature type="binding site" evidence="1">
    <location>
        <begin position="41"/>
        <end position="43"/>
    </location>
    <ligand>
        <name>GTP</name>
        <dbReference type="ChEBI" id="CHEBI:37565"/>
    </ligand>
</feature>
<feature type="binding site" evidence="1">
    <location>
        <position position="41"/>
    </location>
    <ligand>
        <name>Mg(2+)</name>
        <dbReference type="ChEBI" id="CHEBI:18420"/>
    </ligand>
</feature>
<feature type="binding site" description="in other chain" evidence="1">
    <location>
        <position position="130"/>
    </location>
    <ligand>
        <name>IMP</name>
        <dbReference type="ChEBI" id="CHEBI:58053"/>
        <note>ligand shared between dimeric partners</note>
    </ligand>
</feature>
<feature type="binding site" evidence="1">
    <location>
        <position position="144"/>
    </location>
    <ligand>
        <name>IMP</name>
        <dbReference type="ChEBI" id="CHEBI:58053"/>
        <note>ligand shared between dimeric partners</note>
    </ligand>
</feature>
<feature type="binding site" description="in other chain" evidence="1">
    <location>
        <position position="225"/>
    </location>
    <ligand>
        <name>IMP</name>
        <dbReference type="ChEBI" id="CHEBI:58053"/>
        <note>ligand shared between dimeric partners</note>
    </ligand>
</feature>
<feature type="binding site" description="in other chain" evidence="1">
    <location>
        <position position="240"/>
    </location>
    <ligand>
        <name>IMP</name>
        <dbReference type="ChEBI" id="CHEBI:58053"/>
        <note>ligand shared between dimeric partners</note>
    </ligand>
</feature>
<feature type="binding site" evidence="1">
    <location>
        <begin position="300"/>
        <end position="306"/>
    </location>
    <ligand>
        <name>substrate</name>
    </ligand>
</feature>
<feature type="binding site" description="in other chain" evidence="1">
    <location>
        <position position="304"/>
    </location>
    <ligand>
        <name>IMP</name>
        <dbReference type="ChEBI" id="CHEBI:58053"/>
        <note>ligand shared between dimeric partners</note>
    </ligand>
</feature>
<feature type="binding site" evidence="1">
    <location>
        <position position="306"/>
    </location>
    <ligand>
        <name>GTP</name>
        <dbReference type="ChEBI" id="CHEBI:37565"/>
    </ligand>
</feature>
<feature type="binding site" evidence="1">
    <location>
        <begin position="332"/>
        <end position="334"/>
    </location>
    <ligand>
        <name>GTP</name>
        <dbReference type="ChEBI" id="CHEBI:37565"/>
    </ligand>
</feature>
<feature type="binding site" evidence="1">
    <location>
        <begin position="414"/>
        <end position="416"/>
    </location>
    <ligand>
        <name>GTP</name>
        <dbReference type="ChEBI" id="CHEBI:37565"/>
    </ligand>
</feature>